<protein>
    <recommendedName>
        <fullName evidence="1">Flap endonuclease 1</fullName>
        <shortName evidence="1">FEN-1</shortName>
        <ecNumber evidence="1">3.1.-.-</ecNumber>
    </recommendedName>
    <alternativeName>
        <fullName evidence="1">Flap structure-specific endonuclease 1</fullName>
    </alternativeName>
</protein>
<comment type="function">
    <text evidence="1">Structure-specific nuclease with 5'-flap endonuclease and 5'-3' exonuclease activities involved in DNA replication and repair. During DNA replication, cleaves the 5'-overhanging flap structure that is generated by displacement synthesis when DNA polymerase encounters the 5'-end of a downstream Okazaki fragment. It enters the flap from the 5'-end and then tracks to cleave the flap base, leaving a nick for ligation. Also involved in the long patch base excision repair (LP-BER) pathway, by cleaving within the apurinic/apyrimidinic (AP) site-terminated flap. Acts as a genome stabilization factor that prevents flaps from equilibrating into structures that lead to duplications and deletions. Also possesses 5'-3' exonuclease activity on nicked or gapped double-stranded DNA, and exhibits RNase H activity. Also involved in replication and repair of rDNA and in repairing mitochondrial DNA.</text>
</comment>
<comment type="cofactor">
    <cofactor evidence="1">
        <name>Mg(2+)</name>
        <dbReference type="ChEBI" id="CHEBI:18420"/>
    </cofactor>
    <text evidence="1">Binds 2 magnesium ions per subunit. They probably participate in the reaction catalyzed by the enzyme. May bind an additional third magnesium ion after substrate binding.</text>
</comment>
<comment type="subunit">
    <text evidence="1">Interacts with PCNA. Three molecules of fen1 bind to one PCNA trimer with each molecule binding to one PCNA monomer. PCNA stimulates the nuclease activity without altering cleavage specificity.</text>
</comment>
<comment type="subcellular location">
    <subcellularLocation>
        <location evidence="1">Nucleus</location>
        <location evidence="1">Nucleolus</location>
    </subcellularLocation>
    <subcellularLocation>
        <location evidence="1">Nucleus</location>
        <location evidence="1">Nucleoplasm</location>
    </subcellularLocation>
    <subcellularLocation>
        <location evidence="1">Mitochondrion</location>
    </subcellularLocation>
    <text evidence="1">Resides mostly in the nucleoli and relocalizes to the nucleoplasm upon DNA damage.</text>
</comment>
<comment type="alternative products">
    <event type="alternative splicing"/>
    <isoform>
        <id>B9EMY6-1</id>
        <name>B</name>
        <sequence type="displayed"/>
    </isoform>
    <isoform>
        <id>B9EMY6-2</id>
        <name>A</name>
        <sequence type="described" ref="VSP_040395 VSP_040396"/>
    </isoform>
</comment>
<comment type="PTM">
    <text evidence="1">Phosphorylated. Phosphorylation upon DNA damage induces relocalization to the nuclear plasma.</text>
</comment>
<comment type="similarity">
    <text evidence="1">Belongs to the XPG/RAD2 endonuclease family. FEN1 subfamily.</text>
</comment>
<feature type="chain" id="PRO_0000403491" description="Flap endonuclease 1">
    <location>
        <begin position="1"/>
        <end position="380"/>
    </location>
</feature>
<feature type="region of interest" description="N-domain">
    <location>
        <begin position="1"/>
        <end position="104"/>
    </location>
</feature>
<feature type="region of interest" description="I-domain">
    <location>
        <begin position="122"/>
        <end position="253"/>
    </location>
</feature>
<feature type="region of interest" description="Interaction with PCNA" evidence="1">
    <location>
        <begin position="336"/>
        <end position="344"/>
    </location>
</feature>
<feature type="region of interest" description="Disordered" evidence="2">
    <location>
        <begin position="348"/>
        <end position="380"/>
    </location>
</feature>
<feature type="binding site" evidence="1">
    <location>
        <position position="34"/>
    </location>
    <ligand>
        <name>Mg(2+)</name>
        <dbReference type="ChEBI" id="CHEBI:18420"/>
        <label>1</label>
    </ligand>
</feature>
<feature type="binding site" evidence="1">
    <location>
        <position position="47"/>
    </location>
    <ligand>
        <name>DNA</name>
        <dbReference type="ChEBI" id="CHEBI:16991"/>
    </ligand>
</feature>
<feature type="binding site" evidence="1">
    <location>
        <position position="70"/>
    </location>
    <ligand>
        <name>DNA</name>
        <dbReference type="ChEBI" id="CHEBI:16991"/>
    </ligand>
</feature>
<feature type="binding site" evidence="1">
    <location>
        <position position="86"/>
    </location>
    <ligand>
        <name>Mg(2+)</name>
        <dbReference type="ChEBI" id="CHEBI:18420"/>
        <label>1</label>
    </ligand>
</feature>
<feature type="binding site" evidence="1">
    <location>
        <position position="158"/>
    </location>
    <ligand>
        <name>DNA</name>
        <dbReference type="ChEBI" id="CHEBI:16991"/>
    </ligand>
</feature>
<feature type="binding site" evidence="1">
    <location>
        <position position="158"/>
    </location>
    <ligand>
        <name>Mg(2+)</name>
        <dbReference type="ChEBI" id="CHEBI:18420"/>
        <label>1</label>
    </ligand>
</feature>
<feature type="binding site" evidence="1">
    <location>
        <position position="160"/>
    </location>
    <ligand>
        <name>Mg(2+)</name>
        <dbReference type="ChEBI" id="CHEBI:18420"/>
        <label>1</label>
    </ligand>
</feature>
<feature type="binding site" evidence="1">
    <location>
        <position position="179"/>
    </location>
    <ligand>
        <name>Mg(2+)</name>
        <dbReference type="ChEBI" id="CHEBI:18420"/>
        <label>2</label>
    </ligand>
</feature>
<feature type="binding site" evidence="1">
    <location>
        <position position="181"/>
    </location>
    <ligand>
        <name>Mg(2+)</name>
        <dbReference type="ChEBI" id="CHEBI:18420"/>
        <label>2</label>
    </ligand>
</feature>
<feature type="binding site" evidence="1">
    <location>
        <position position="231"/>
    </location>
    <ligand>
        <name>DNA</name>
        <dbReference type="ChEBI" id="CHEBI:16991"/>
    </ligand>
</feature>
<feature type="binding site" evidence="1">
    <location>
        <position position="233"/>
    </location>
    <ligand>
        <name>DNA</name>
        <dbReference type="ChEBI" id="CHEBI:16991"/>
    </ligand>
</feature>
<feature type="binding site" evidence="1">
    <location>
        <position position="233"/>
    </location>
    <ligand>
        <name>Mg(2+)</name>
        <dbReference type="ChEBI" id="CHEBI:18420"/>
        <label>2</label>
    </ligand>
</feature>
<feature type="splice variant" id="VSP_040395" description="In isoform A." evidence="3">
    <original>GKVFATATEDMDGLTFGTGVLLR</original>
    <variation>PHCQRSQKASYPGVPVHSPSAGH</variation>
    <location>
        <begin position="170"/>
        <end position="192"/>
    </location>
</feature>
<feature type="splice variant" id="VSP_040396" description="In isoform A." evidence="3">
    <location>
        <begin position="193"/>
        <end position="380"/>
    </location>
</feature>
<evidence type="ECO:0000255" key="1">
    <source>
        <dbReference type="HAMAP-Rule" id="MF_03140"/>
    </source>
</evidence>
<evidence type="ECO:0000256" key="2">
    <source>
        <dbReference type="SAM" id="MobiDB-lite"/>
    </source>
</evidence>
<evidence type="ECO:0000303" key="3">
    <source>
    </source>
</evidence>
<dbReference type="EC" id="3.1.-.-" evidence="1"/>
<dbReference type="EMBL" id="BT057011">
    <property type="protein sequence ID" value="ACM08883.1"/>
    <property type="molecule type" value="mRNA"/>
</dbReference>
<dbReference type="EMBL" id="BT057756">
    <property type="protein sequence ID" value="ACM09628.1"/>
    <property type="molecule type" value="mRNA"/>
</dbReference>
<dbReference type="EMBL" id="BT057932">
    <property type="protein sequence ID" value="ACM09804.1"/>
    <property type="molecule type" value="mRNA"/>
</dbReference>
<dbReference type="RefSeq" id="XP_014015192.1">
    <molecule id="B9EMY6-1"/>
    <property type="nucleotide sequence ID" value="XM_014159717.2"/>
</dbReference>
<dbReference type="RefSeq" id="XP_014015193.1">
    <molecule id="B9EMY6-1"/>
    <property type="nucleotide sequence ID" value="XM_014159718.2"/>
</dbReference>
<dbReference type="RefSeq" id="XP_014015194.1">
    <molecule id="B9EMY6-1"/>
    <property type="nucleotide sequence ID" value="XM_014159719.2"/>
</dbReference>
<dbReference type="SMR" id="B9EMY6"/>
<dbReference type="STRING" id="8030.ENSSSAP00000112685"/>
<dbReference type="PaxDb" id="8030-ENSSSAP00000112685"/>
<dbReference type="Ensembl" id="ENSSSAT00070035961">
    <molecule id="B9EMY6-1"/>
    <property type="protein sequence ID" value="ENSSSAP00070034245"/>
    <property type="gene ID" value="ENSSSAG00070022516"/>
</dbReference>
<dbReference type="GeneID" id="100196000"/>
<dbReference type="KEGG" id="sasa:100196000"/>
<dbReference type="CTD" id="2237"/>
<dbReference type="OrthoDB" id="508082at7898"/>
<dbReference type="Proteomes" id="UP000087266">
    <property type="component" value="Chromosome ssa19"/>
</dbReference>
<dbReference type="GO" id="GO:0005739">
    <property type="term" value="C:mitochondrion"/>
    <property type="evidence" value="ECO:0007669"/>
    <property type="project" value="UniProtKB-SubCell"/>
</dbReference>
<dbReference type="GO" id="GO:0005730">
    <property type="term" value="C:nucleolus"/>
    <property type="evidence" value="ECO:0007669"/>
    <property type="project" value="UniProtKB-SubCell"/>
</dbReference>
<dbReference type="GO" id="GO:0005654">
    <property type="term" value="C:nucleoplasm"/>
    <property type="evidence" value="ECO:0007669"/>
    <property type="project" value="UniProtKB-SubCell"/>
</dbReference>
<dbReference type="GO" id="GO:0008409">
    <property type="term" value="F:5'-3' exonuclease activity"/>
    <property type="evidence" value="ECO:0007669"/>
    <property type="project" value="UniProtKB-UniRule"/>
</dbReference>
<dbReference type="GO" id="GO:0017108">
    <property type="term" value="F:5'-flap endonuclease activity"/>
    <property type="evidence" value="ECO:0007669"/>
    <property type="project" value="UniProtKB-UniRule"/>
</dbReference>
<dbReference type="GO" id="GO:0003677">
    <property type="term" value="F:DNA binding"/>
    <property type="evidence" value="ECO:0007669"/>
    <property type="project" value="UniProtKB-UniRule"/>
</dbReference>
<dbReference type="GO" id="GO:0000287">
    <property type="term" value="F:magnesium ion binding"/>
    <property type="evidence" value="ECO:0007669"/>
    <property type="project" value="UniProtKB-UniRule"/>
</dbReference>
<dbReference type="GO" id="GO:0030145">
    <property type="term" value="F:manganese ion binding"/>
    <property type="evidence" value="ECO:0007669"/>
    <property type="project" value="TreeGrafter"/>
</dbReference>
<dbReference type="GO" id="GO:0004523">
    <property type="term" value="F:RNA-DNA hybrid ribonuclease activity"/>
    <property type="evidence" value="ECO:0007669"/>
    <property type="project" value="TreeGrafter"/>
</dbReference>
<dbReference type="GO" id="GO:0006284">
    <property type="term" value="P:base-excision repair"/>
    <property type="evidence" value="ECO:0007669"/>
    <property type="project" value="UniProtKB-UniRule"/>
</dbReference>
<dbReference type="GO" id="GO:0043137">
    <property type="term" value="P:DNA replication, removal of RNA primer"/>
    <property type="evidence" value="ECO:0007669"/>
    <property type="project" value="UniProtKB-UniRule"/>
</dbReference>
<dbReference type="CDD" id="cd09867">
    <property type="entry name" value="PIN_FEN1"/>
    <property type="match status" value="1"/>
</dbReference>
<dbReference type="FunFam" id="1.10.150.20:FF:000009">
    <property type="entry name" value="Flap endonuclease 1"/>
    <property type="match status" value="1"/>
</dbReference>
<dbReference type="FunFam" id="3.40.50.1010:FF:000003">
    <property type="entry name" value="Flap endonuclease 1"/>
    <property type="match status" value="1"/>
</dbReference>
<dbReference type="Gene3D" id="1.10.150.20">
    <property type="entry name" value="5' to 3' exonuclease, C-terminal subdomain"/>
    <property type="match status" value="1"/>
</dbReference>
<dbReference type="Gene3D" id="3.40.50.1010">
    <property type="entry name" value="5'-nuclease"/>
    <property type="match status" value="1"/>
</dbReference>
<dbReference type="HAMAP" id="MF_00614">
    <property type="entry name" value="Fen"/>
    <property type="match status" value="1"/>
</dbReference>
<dbReference type="InterPro" id="IPR036279">
    <property type="entry name" value="5-3_exonuclease_C_sf"/>
</dbReference>
<dbReference type="InterPro" id="IPR023426">
    <property type="entry name" value="Flap_endonuc"/>
</dbReference>
<dbReference type="InterPro" id="IPR008918">
    <property type="entry name" value="HhH2"/>
</dbReference>
<dbReference type="InterPro" id="IPR029060">
    <property type="entry name" value="PIN-like_dom_sf"/>
</dbReference>
<dbReference type="InterPro" id="IPR006086">
    <property type="entry name" value="XPG-I_dom"/>
</dbReference>
<dbReference type="InterPro" id="IPR006084">
    <property type="entry name" value="XPG/Rad2"/>
</dbReference>
<dbReference type="InterPro" id="IPR019974">
    <property type="entry name" value="XPG_CS"/>
</dbReference>
<dbReference type="InterPro" id="IPR006085">
    <property type="entry name" value="XPG_DNA_repair_N"/>
</dbReference>
<dbReference type="PANTHER" id="PTHR11081:SF51">
    <property type="entry name" value="FLAP ENDONUCLEASE 1"/>
    <property type="match status" value="1"/>
</dbReference>
<dbReference type="PANTHER" id="PTHR11081">
    <property type="entry name" value="FLAP ENDONUCLEASE FAMILY MEMBER"/>
    <property type="match status" value="1"/>
</dbReference>
<dbReference type="Pfam" id="PF00867">
    <property type="entry name" value="XPG_I"/>
    <property type="match status" value="1"/>
</dbReference>
<dbReference type="Pfam" id="PF00752">
    <property type="entry name" value="XPG_N"/>
    <property type="match status" value="1"/>
</dbReference>
<dbReference type="PRINTS" id="PR00853">
    <property type="entry name" value="XPGRADSUPER"/>
</dbReference>
<dbReference type="SMART" id="SM00279">
    <property type="entry name" value="HhH2"/>
    <property type="match status" value="1"/>
</dbReference>
<dbReference type="SMART" id="SM00484">
    <property type="entry name" value="XPGI"/>
    <property type="match status" value="1"/>
</dbReference>
<dbReference type="SMART" id="SM00485">
    <property type="entry name" value="XPGN"/>
    <property type="match status" value="1"/>
</dbReference>
<dbReference type="SUPFAM" id="SSF47807">
    <property type="entry name" value="5' to 3' exonuclease, C-terminal subdomain"/>
    <property type="match status" value="1"/>
</dbReference>
<dbReference type="SUPFAM" id="SSF88723">
    <property type="entry name" value="PIN domain-like"/>
    <property type="match status" value="1"/>
</dbReference>
<dbReference type="PROSITE" id="PS00841">
    <property type="entry name" value="XPG_1"/>
    <property type="match status" value="1"/>
</dbReference>
<dbReference type="PROSITE" id="PS00842">
    <property type="entry name" value="XPG_2"/>
    <property type="match status" value="1"/>
</dbReference>
<proteinExistence type="evidence at transcript level"/>
<reference key="1">
    <citation type="journal article" date="2010" name="BMC Genomics">
        <title>Salmo salar and Esox lucius full-length cDNA sequences reveal changes in evolutionary pressures on a post-tetraploidization genome.</title>
        <authorList>
            <person name="Leong J.S."/>
            <person name="Jantzen S.G."/>
            <person name="von Schalburg K.R."/>
            <person name="Cooper G.A."/>
            <person name="Messmer A.M."/>
            <person name="Liao N.Y."/>
            <person name="Munro S."/>
            <person name="Moore R."/>
            <person name="Holt R.A."/>
            <person name="Jones S.J."/>
            <person name="Davidson W.S."/>
            <person name="Koop B.F."/>
        </authorList>
    </citation>
    <scope>NUCLEOTIDE SEQUENCE [LARGE SCALE MRNA] (ISOFORMS A AND B)</scope>
    <source>
        <tissue>Head kidney</tissue>
        <tissue>Thyroid</tissue>
    </source>
</reference>
<sequence>MGIHGLAKLIADQAPSAIKEQDIKNYFGRKIAIDASMCMYQFLVAVRQDGNVLQNENGETTSHLMGMFYRTIRMLEHGIKPVYVFDGKPPQLKSGELEKRGERRAEAEKLLAQAQEAGEQENIDKFSKRLVKVTQQHNDECKKLLTLMGVPYIEAPCEAEASCAALVKAGKVFATATEDMDGLTFGTGVLLRHLTASEAKKLPIQEFQFTRLLQDINLTHEQFIDLCILLGCDYCGTIKGIGPKRAIDLIRQHGSIEEILENIDSSKHPAPEDWLYKEARGLFLQPDVVDCSTVDLKWSEPDEDALIQFMCAEKQFSEDRIKNGCKKILKSRQGSTQGRLDTFFTITGSLSSKRKEPETKGSNKKKQKTGATPGKFKKGK</sequence>
<accession>B9EMY6</accession>
<accession>B9EQK7</accession>
<name>FEN1_SALSA</name>
<gene>
    <name type="primary">fen1</name>
</gene>
<keyword id="KW-0025">Alternative splicing</keyword>
<keyword id="KW-0227">DNA damage</keyword>
<keyword id="KW-0234">DNA repair</keyword>
<keyword id="KW-0235">DNA replication</keyword>
<keyword id="KW-0255">Endonuclease</keyword>
<keyword id="KW-0269">Exonuclease</keyword>
<keyword id="KW-0378">Hydrolase</keyword>
<keyword id="KW-0460">Magnesium</keyword>
<keyword id="KW-0479">Metal-binding</keyword>
<keyword id="KW-0496">Mitochondrion</keyword>
<keyword id="KW-0540">Nuclease</keyword>
<keyword id="KW-0539">Nucleus</keyword>
<keyword id="KW-0597">Phosphoprotein</keyword>
<keyword id="KW-1185">Reference proteome</keyword>
<organism>
    <name type="scientific">Salmo salar</name>
    <name type="common">Atlantic salmon</name>
    <dbReference type="NCBI Taxonomy" id="8030"/>
    <lineage>
        <taxon>Eukaryota</taxon>
        <taxon>Metazoa</taxon>
        <taxon>Chordata</taxon>
        <taxon>Craniata</taxon>
        <taxon>Vertebrata</taxon>
        <taxon>Euteleostomi</taxon>
        <taxon>Actinopterygii</taxon>
        <taxon>Neopterygii</taxon>
        <taxon>Teleostei</taxon>
        <taxon>Protacanthopterygii</taxon>
        <taxon>Salmoniformes</taxon>
        <taxon>Salmonidae</taxon>
        <taxon>Salmoninae</taxon>
        <taxon>Salmo</taxon>
    </lineage>
</organism>